<proteinExistence type="inferred from homology"/>
<evidence type="ECO:0000255" key="1">
    <source>
        <dbReference type="HAMAP-Rule" id="MF_00042"/>
    </source>
</evidence>
<evidence type="ECO:0000255" key="2">
    <source>
        <dbReference type="PROSITE-ProRule" id="PRU00408"/>
    </source>
</evidence>
<organism>
    <name type="scientific">Pseudomonas putida (strain ATCC 700007 / DSM 6899 / JCM 31910 / BCRC 17059 / LMG 24140 / F1)</name>
    <dbReference type="NCBI Taxonomy" id="351746"/>
    <lineage>
        <taxon>Bacteria</taxon>
        <taxon>Pseudomonadati</taxon>
        <taxon>Pseudomonadota</taxon>
        <taxon>Gammaproteobacteria</taxon>
        <taxon>Pseudomonadales</taxon>
        <taxon>Pseudomonadaceae</taxon>
        <taxon>Pseudomonas</taxon>
    </lineage>
</organism>
<comment type="function">
    <text evidence="1">Endonuclease that specifically degrades the RNA of RNA-DNA hybrids.</text>
</comment>
<comment type="catalytic activity">
    <reaction evidence="1">
        <text>Endonucleolytic cleavage to 5'-phosphomonoester.</text>
        <dbReference type="EC" id="3.1.26.4"/>
    </reaction>
</comment>
<comment type="cofactor">
    <cofactor evidence="1">
        <name>Mg(2+)</name>
        <dbReference type="ChEBI" id="CHEBI:18420"/>
    </cofactor>
    <text evidence="1">Binds 1 Mg(2+) ion per subunit. May bind a second metal ion at a regulatory site, or after substrate binding.</text>
</comment>
<comment type="subunit">
    <text evidence="1">Monomer.</text>
</comment>
<comment type="subcellular location">
    <subcellularLocation>
        <location evidence="1">Cytoplasm</location>
    </subcellularLocation>
</comment>
<comment type="similarity">
    <text evidence="1">Belongs to the RNase H family.</text>
</comment>
<feature type="chain" id="PRO_1000074657" description="Ribonuclease H">
    <location>
        <begin position="1"/>
        <end position="148"/>
    </location>
</feature>
<feature type="domain" description="RNase H type-1" evidence="2">
    <location>
        <begin position="1"/>
        <end position="142"/>
    </location>
</feature>
<feature type="binding site" evidence="1">
    <location>
        <position position="10"/>
    </location>
    <ligand>
        <name>Mg(2+)</name>
        <dbReference type="ChEBI" id="CHEBI:18420"/>
        <label>1</label>
    </ligand>
</feature>
<feature type="binding site" evidence="1">
    <location>
        <position position="10"/>
    </location>
    <ligand>
        <name>Mg(2+)</name>
        <dbReference type="ChEBI" id="CHEBI:18420"/>
        <label>2</label>
    </ligand>
</feature>
<feature type="binding site" evidence="1">
    <location>
        <position position="48"/>
    </location>
    <ligand>
        <name>Mg(2+)</name>
        <dbReference type="ChEBI" id="CHEBI:18420"/>
        <label>1</label>
    </ligand>
</feature>
<feature type="binding site" evidence="1">
    <location>
        <position position="70"/>
    </location>
    <ligand>
        <name>Mg(2+)</name>
        <dbReference type="ChEBI" id="CHEBI:18420"/>
        <label>1</label>
    </ligand>
</feature>
<feature type="binding site" evidence="1">
    <location>
        <position position="134"/>
    </location>
    <ligand>
        <name>Mg(2+)</name>
        <dbReference type="ChEBI" id="CHEBI:18420"/>
        <label>2</label>
    </ligand>
</feature>
<protein>
    <recommendedName>
        <fullName evidence="1">Ribonuclease H</fullName>
        <shortName evidence="1">RNase H</shortName>
        <ecNumber evidence="1">3.1.26.4</ecNumber>
    </recommendedName>
</protein>
<dbReference type="EC" id="3.1.26.4" evidence="1"/>
<dbReference type="EMBL" id="CP000712">
    <property type="protein sequence ID" value="ABQ77879.1"/>
    <property type="molecule type" value="Genomic_DNA"/>
</dbReference>
<dbReference type="SMR" id="A5W169"/>
<dbReference type="KEGG" id="ppf:Pput_1723"/>
<dbReference type="eggNOG" id="COG0328">
    <property type="taxonomic scope" value="Bacteria"/>
</dbReference>
<dbReference type="HOGENOM" id="CLU_030894_6_0_6"/>
<dbReference type="GO" id="GO:0005737">
    <property type="term" value="C:cytoplasm"/>
    <property type="evidence" value="ECO:0007669"/>
    <property type="project" value="UniProtKB-SubCell"/>
</dbReference>
<dbReference type="GO" id="GO:0000287">
    <property type="term" value="F:magnesium ion binding"/>
    <property type="evidence" value="ECO:0007669"/>
    <property type="project" value="UniProtKB-UniRule"/>
</dbReference>
<dbReference type="GO" id="GO:0003676">
    <property type="term" value="F:nucleic acid binding"/>
    <property type="evidence" value="ECO:0007669"/>
    <property type="project" value="InterPro"/>
</dbReference>
<dbReference type="GO" id="GO:0004523">
    <property type="term" value="F:RNA-DNA hybrid ribonuclease activity"/>
    <property type="evidence" value="ECO:0007669"/>
    <property type="project" value="UniProtKB-UniRule"/>
</dbReference>
<dbReference type="GO" id="GO:0043137">
    <property type="term" value="P:DNA replication, removal of RNA primer"/>
    <property type="evidence" value="ECO:0007669"/>
    <property type="project" value="TreeGrafter"/>
</dbReference>
<dbReference type="CDD" id="cd09278">
    <property type="entry name" value="RNase_HI_prokaryote_like"/>
    <property type="match status" value="1"/>
</dbReference>
<dbReference type="FunFam" id="3.30.420.10:FF:000089">
    <property type="entry name" value="Ribonuclease H"/>
    <property type="match status" value="1"/>
</dbReference>
<dbReference type="Gene3D" id="3.30.420.10">
    <property type="entry name" value="Ribonuclease H-like superfamily/Ribonuclease H"/>
    <property type="match status" value="1"/>
</dbReference>
<dbReference type="HAMAP" id="MF_00042">
    <property type="entry name" value="RNase_H"/>
    <property type="match status" value="1"/>
</dbReference>
<dbReference type="InterPro" id="IPR050092">
    <property type="entry name" value="RNase_H"/>
</dbReference>
<dbReference type="InterPro" id="IPR012337">
    <property type="entry name" value="RNaseH-like_sf"/>
</dbReference>
<dbReference type="InterPro" id="IPR002156">
    <property type="entry name" value="RNaseH_domain"/>
</dbReference>
<dbReference type="InterPro" id="IPR036397">
    <property type="entry name" value="RNaseH_sf"/>
</dbReference>
<dbReference type="InterPro" id="IPR022892">
    <property type="entry name" value="RNaseHI"/>
</dbReference>
<dbReference type="NCBIfam" id="NF001236">
    <property type="entry name" value="PRK00203.1"/>
    <property type="match status" value="1"/>
</dbReference>
<dbReference type="PANTHER" id="PTHR10642">
    <property type="entry name" value="RIBONUCLEASE H1"/>
    <property type="match status" value="1"/>
</dbReference>
<dbReference type="PANTHER" id="PTHR10642:SF26">
    <property type="entry name" value="RIBONUCLEASE H1"/>
    <property type="match status" value="1"/>
</dbReference>
<dbReference type="Pfam" id="PF00075">
    <property type="entry name" value="RNase_H"/>
    <property type="match status" value="1"/>
</dbReference>
<dbReference type="SUPFAM" id="SSF53098">
    <property type="entry name" value="Ribonuclease H-like"/>
    <property type="match status" value="1"/>
</dbReference>
<dbReference type="PROSITE" id="PS50879">
    <property type="entry name" value="RNASE_H_1"/>
    <property type="match status" value="1"/>
</dbReference>
<gene>
    <name evidence="1" type="primary">rnhA</name>
    <name type="ordered locus">Pput_1723</name>
</gene>
<sequence>MSDSVEMFTDGACKGNPGPGGWGVLMIYKGVEKELWGGERETTNNRMELMAAIQGLMSLKRECEVVLTTDSQYVMKGINEWMVNWKKRGWKTAAKEPVKNADLWQQLDEQVNRHKVTWKWVRGHIGHPGNERADQLANRGVDEVRAQR</sequence>
<name>RNH_PSEP1</name>
<accession>A5W169</accession>
<reference key="1">
    <citation type="submission" date="2007-05" db="EMBL/GenBank/DDBJ databases">
        <title>Complete sequence of Pseudomonas putida F1.</title>
        <authorList>
            <consortium name="US DOE Joint Genome Institute"/>
            <person name="Copeland A."/>
            <person name="Lucas S."/>
            <person name="Lapidus A."/>
            <person name="Barry K."/>
            <person name="Detter J.C."/>
            <person name="Glavina del Rio T."/>
            <person name="Hammon N."/>
            <person name="Israni S."/>
            <person name="Dalin E."/>
            <person name="Tice H."/>
            <person name="Pitluck S."/>
            <person name="Chain P."/>
            <person name="Malfatti S."/>
            <person name="Shin M."/>
            <person name="Vergez L."/>
            <person name="Schmutz J."/>
            <person name="Larimer F."/>
            <person name="Land M."/>
            <person name="Hauser L."/>
            <person name="Kyrpides N."/>
            <person name="Lykidis A."/>
            <person name="Parales R."/>
            <person name="Richardson P."/>
        </authorList>
    </citation>
    <scope>NUCLEOTIDE SEQUENCE [LARGE SCALE GENOMIC DNA]</scope>
    <source>
        <strain>ATCC 700007 / DSM 6899 / JCM 31910 / BCRC 17059 / LMG 24140 / F1</strain>
    </source>
</reference>
<keyword id="KW-0963">Cytoplasm</keyword>
<keyword id="KW-0255">Endonuclease</keyword>
<keyword id="KW-0378">Hydrolase</keyword>
<keyword id="KW-0460">Magnesium</keyword>
<keyword id="KW-0479">Metal-binding</keyword>
<keyword id="KW-0540">Nuclease</keyword>